<keyword id="KW-0131">Cell cycle</keyword>
<keyword id="KW-0132">Cell division</keyword>
<keyword id="KW-0997">Cell inner membrane</keyword>
<keyword id="KW-1003">Cell membrane</keyword>
<keyword id="KW-0133">Cell shape</keyword>
<keyword id="KW-0961">Cell wall biogenesis/degradation</keyword>
<keyword id="KW-0460">Magnesium</keyword>
<keyword id="KW-0472">Membrane</keyword>
<keyword id="KW-0479">Metal-binding</keyword>
<keyword id="KW-0573">Peptidoglycan synthesis</keyword>
<keyword id="KW-0808">Transferase</keyword>
<keyword id="KW-0812">Transmembrane</keyword>
<keyword id="KW-1133">Transmembrane helix</keyword>
<dbReference type="EC" id="2.7.8.13" evidence="1"/>
<dbReference type="EMBL" id="CP001052">
    <property type="protein sequence ID" value="ACD17863.1"/>
    <property type="molecule type" value="Genomic_DNA"/>
</dbReference>
<dbReference type="RefSeq" id="WP_012434424.1">
    <property type="nucleotide sequence ID" value="NC_010681.1"/>
</dbReference>
<dbReference type="SMR" id="B2SYX9"/>
<dbReference type="STRING" id="398527.Bphyt_3473"/>
<dbReference type="KEGG" id="bpy:Bphyt_3473"/>
<dbReference type="eggNOG" id="COG0472">
    <property type="taxonomic scope" value="Bacteria"/>
</dbReference>
<dbReference type="HOGENOM" id="CLU_023982_0_0_4"/>
<dbReference type="OrthoDB" id="9805475at2"/>
<dbReference type="UniPathway" id="UPA00219"/>
<dbReference type="Proteomes" id="UP000001739">
    <property type="component" value="Chromosome 1"/>
</dbReference>
<dbReference type="GO" id="GO:0005886">
    <property type="term" value="C:plasma membrane"/>
    <property type="evidence" value="ECO:0007669"/>
    <property type="project" value="UniProtKB-SubCell"/>
</dbReference>
<dbReference type="GO" id="GO:0046872">
    <property type="term" value="F:metal ion binding"/>
    <property type="evidence" value="ECO:0007669"/>
    <property type="project" value="UniProtKB-KW"/>
</dbReference>
<dbReference type="GO" id="GO:0008963">
    <property type="term" value="F:phospho-N-acetylmuramoyl-pentapeptide-transferase activity"/>
    <property type="evidence" value="ECO:0007669"/>
    <property type="project" value="UniProtKB-UniRule"/>
</dbReference>
<dbReference type="GO" id="GO:0051992">
    <property type="term" value="F:UDP-N-acetylmuramoyl-L-alanyl-D-glutamyl-meso-2,6-diaminopimelyl-D-alanyl-D-alanine:undecaprenyl-phosphate transferase activity"/>
    <property type="evidence" value="ECO:0007669"/>
    <property type="project" value="RHEA"/>
</dbReference>
<dbReference type="GO" id="GO:0051301">
    <property type="term" value="P:cell division"/>
    <property type="evidence" value="ECO:0007669"/>
    <property type="project" value="UniProtKB-KW"/>
</dbReference>
<dbReference type="GO" id="GO:0071555">
    <property type="term" value="P:cell wall organization"/>
    <property type="evidence" value="ECO:0007669"/>
    <property type="project" value="UniProtKB-KW"/>
</dbReference>
<dbReference type="GO" id="GO:0009252">
    <property type="term" value="P:peptidoglycan biosynthetic process"/>
    <property type="evidence" value="ECO:0007669"/>
    <property type="project" value="UniProtKB-UniRule"/>
</dbReference>
<dbReference type="GO" id="GO:0008360">
    <property type="term" value="P:regulation of cell shape"/>
    <property type="evidence" value="ECO:0007669"/>
    <property type="project" value="UniProtKB-KW"/>
</dbReference>
<dbReference type="CDD" id="cd06852">
    <property type="entry name" value="GT_MraY"/>
    <property type="match status" value="1"/>
</dbReference>
<dbReference type="HAMAP" id="MF_00038">
    <property type="entry name" value="MraY"/>
    <property type="match status" value="1"/>
</dbReference>
<dbReference type="InterPro" id="IPR000715">
    <property type="entry name" value="Glycosyl_transferase_4"/>
</dbReference>
<dbReference type="InterPro" id="IPR003524">
    <property type="entry name" value="PNAcMuramoyl-5peptid_Trfase"/>
</dbReference>
<dbReference type="InterPro" id="IPR018480">
    <property type="entry name" value="PNAcMuramoyl-5peptid_Trfase_CS"/>
</dbReference>
<dbReference type="NCBIfam" id="TIGR00445">
    <property type="entry name" value="mraY"/>
    <property type="match status" value="1"/>
</dbReference>
<dbReference type="PANTHER" id="PTHR22926">
    <property type="entry name" value="PHOSPHO-N-ACETYLMURAMOYL-PENTAPEPTIDE-TRANSFERASE"/>
    <property type="match status" value="1"/>
</dbReference>
<dbReference type="PANTHER" id="PTHR22926:SF5">
    <property type="entry name" value="PHOSPHO-N-ACETYLMURAMOYL-PENTAPEPTIDE-TRANSFERASE HOMOLOG"/>
    <property type="match status" value="1"/>
</dbReference>
<dbReference type="Pfam" id="PF00953">
    <property type="entry name" value="Glycos_transf_4"/>
    <property type="match status" value="1"/>
</dbReference>
<dbReference type="Pfam" id="PF10555">
    <property type="entry name" value="MraY_sig1"/>
    <property type="match status" value="1"/>
</dbReference>
<dbReference type="PROSITE" id="PS01347">
    <property type="entry name" value="MRAY_1"/>
    <property type="match status" value="1"/>
</dbReference>
<dbReference type="PROSITE" id="PS01348">
    <property type="entry name" value="MRAY_2"/>
    <property type="match status" value="1"/>
</dbReference>
<organism>
    <name type="scientific">Paraburkholderia phytofirmans (strain DSM 17436 / LMG 22146 / PsJN)</name>
    <name type="common">Burkholderia phytofirmans</name>
    <dbReference type="NCBI Taxonomy" id="398527"/>
    <lineage>
        <taxon>Bacteria</taxon>
        <taxon>Pseudomonadati</taxon>
        <taxon>Pseudomonadota</taxon>
        <taxon>Betaproteobacteria</taxon>
        <taxon>Burkholderiales</taxon>
        <taxon>Burkholderiaceae</taxon>
        <taxon>Paraburkholderia</taxon>
    </lineage>
</organism>
<name>MRAY_PARPJ</name>
<accession>B2SYX9</accession>
<sequence>MLLALAQWLQNDASFLRVFSYLTFRAVMATITALLIGLVCGPAVIRKLTAMKVGQAVRKDGPQTHLVKSGTPTMGGVLILLGIAVATLLWADLTNRFIWIVMLVTFGFGVIGWVDDYRKVVYKDPRGMSSREKYFWQSVIGLFAAVYLAFSVSEASNVRVFDLFMAWVRSGLSMGLPPHADLMLPFVKSISYPLGVWGFIVLTYLVIVGASNAVNLTDGLDGLVIMPVVLVGASLGVFAYVMGSSVYSKYLLFPHIAGAGELLIFCSAMGGAGLAFLWFNTHPAQMFMGDVGALALGGALGTVAVIVRQEIVLFIMGGIFVAETLSVMLQVTWFKFTKRRFGEGRRLFKMAPLHHHFELSGWKETQVVVRFWIITLMLCLFGLSTLKLR</sequence>
<gene>
    <name evidence="1" type="primary">mraY</name>
    <name type="ordered locus">Bphyt_3473</name>
</gene>
<comment type="function">
    <text evidence="1">Catalyzes the initial step of the lipid cycle reactions in the biosynthesis of the cell wall peptidoglycan: transfers peptidoglycan precursor phospho-MurNAc-pentapeptide from UDP-MurNAc-pentapeptide onto the lipid carrier undecaprenyl phosphate, yielding undecaprenyl-pyrophosphoryl-MurNAc-pentapeptide, known as lipid I.</text>
</comment>
<comment type="catalytic activity">
    <reaction evidence="1">
        <text>UDP-N-acetyl-alpha-D-muramoyl-L-alanyl-gamma-D-glutamyl-meso-2,6-diaminopimeloyl-D-alanyl-D-alanine + di-trans,octa-cis-undecaprenyl phosphate = di-trans,octa-cis-undecaprenyl diphospho-N-acetyl-alpha-D-muramoyl-L-alanyl-D-glutamyl-meso-2,6-diaminopimeloyl-D-alanyl-D-alanine + UMP</text>
        <dbReference type="Rhea" id="RHEA:28386"/>
        <dbReference type="ChEBI" id="CHEBI:57865"/>
        <dbReference type="ChEBI" id="CHEBI:60392"/>
        <dbReference type="ChEBI" id="CHEBI:61386"/>
        <dbReference type="ChEBI" id="CHEBI:61387"/>
        <dbReference type="EC" id="2.7.8.13"/>
    </reaction>
</comment>
<comment type="cofactor">
    <cofactor evidence="1">
        <name>Mg(2+)</name>
        <dbReference type="ChEBI" id="CHEBI:18420"/>
    </cofactor>
</comment>
<comment type="pathway">
    <text evidence="1">Cell wall biogenesis; peptidoglycan biosynthesis.</text>
</comment>
<comment type="subcellular location">
    <subcellularLocation>
        <location evidence="1">Cell inner membrane</location>
        <topology evidence="1">Multi-pass membrane protein</topology>
    </subcellularLocation>
</comment>
<comment type="similarity">
    <text evidence="1">Belongs to the glycosyltransferase 4 family. MraY subfamily.</text>
</comment>
<reference key="1">
    <citation type="journal article" date="2011" name="J. Bacteriol.">
        <title>Complete genome sequence of the plant growth-promoting endophyte Burkholderia phytofirmans strain PsJN.</title>
        <authorList>
            <person name="Weilharter A."/>
            <person name="Mitter B."/>
            <person name="Shin M.V."/>
            <person name="Chain P.S."/>
            <person name="Nowak J."/>
            <person name="Sessitsch A."/>
        </authorList>
    </citation>
    <scope>NUCLEOTIDE SEQUENCE [LARGE SCALE GENOMIC DNA]</scope>
    <source>
        <strain>DSM 17436 / LMG 22146 / PsJN</strain>
    </source>
</reference>
<feature type="chain" id="PRO_1000090604" description="Phospho-N-acetylmuramoyl-pentapeptide-transferase">
    <location>
        <begin position="1"/>
        <end position="389"/>
    </location>
</feature>
<feature type="transmembrane region" description="Helical" evidence="1">
    <location>
        <begin position="25"/>
        <end position="45"/>
    </location>
</feature>
<feature type="transmembrane region" description="Helical" evidence="1">
    <location>
        <begin position="73"/>
        <end position="93"/>
    </location>
</feature>
<feature type="transmembrane region" description="Helical" evidence="1">
    <location>
        <begin position="97"/>
        <end position="117"/>
    </location>
</feature>
<feature type="transmembrane region" description="Helical" evidence="1">
    <location>
        <begin position="135"/>
        <end position="155"/>
    </location>
</feature>
<feature type="transmembrane region" description="Helical" evidence="1">
    <location>
        <begin position="190"/>
        <end position="210"/>
    </location>
</feature>
<feature type="transmembrane region" description="Helical" evidence="1">
    <location>
        <begin position="222"/>
        <end position="242"/>
    </location>
</feature>
<feature type="transmembrane region" description="Helical" evidence="1">
    <location>
        <begin position="259"/>
        <end position="279"/>
    </location>
</feature>
<feature type="transmembrane region" description="Helical" evidence="1">
    <location>
        <begin position="287"/>
        <end position="307"/>
    </location>
</feature>
<feature type="transmembrane region" description="Helical" evidence="1">
    <location>
        <begin position="311"/>
        <end position="331"/>
    </location>
</feature>
<feature type="transmembrane region" description="Helical" evidence="1">
    <location>
        <begin position="366"/>
        <end position="386"/>
    </location>
</feature>
<proteinExistence type="inferred from homology"/>
<protein>
    <recommendedName>
        <fullName evidence="1">Phospho-N-acetylmuramoyl-pentapeptide-transferase</fullName>
        <ecNumber evidence="1">2.7.8.13</ecNumber>
    </recommendedName>
    <alternativeName>
        <fullName evidence="1">UDP-MurNAc-pentapeptide phosphotransferase</fullName>
    </alternativeName>
</protein>
<evidence type="ECO:0000255" key="1">
    <source>
        <dbReference type="HAMAP-Rule" id="MF_00038"/>
    </source>
</evidence>